<evidence type="ECO:0000255" key="1">
    <source>
        <dbReference type="HAMAP-Rule" id="MF_00451"/>
    </source>
</evidence>
<keyword id="KW-0067">ATP-binding</keyword>
<keyword id="KW-0963">Cytoplasm</keyword>
<keyword id="KW-0418">Kinase</keyword>
<keyword id="KW-0460">Magnesium</keyword>
<keyword id="KW-0479">Metal-binding</keyword>
<keyword id="KW-0546">Nucleotide metabolism</keyword>
<keyword id="KW-0547">Nucleotide-binding</keyword>
<keyword id="KW-0597">Phosphoprotein</keyword>
<keyword id="KW-0808">Transferase</keyword>
<name>NDK_ALISL</name>
<comment type="function">
    <text evidence="1">Major role in the synthesis of nucleoside triphosphates other than ATP. The ATP gamma phosphate is transferred to the NDP beta phosphate via a ping-pong mechanism, using a phosphorylated active-site intermediate.</text>
</comment>
<comment type="catalytic activity">
    <reaction evidence="1">
        <text>a 2'-deoxyribonucleoside 5'-diphosphate + ATP = a 2'-deoxyribonucleoside 5'-triphosphate + ADP</text>
        <dbReference type="Rhea" id="RHEA:44640"/>
        <dbReference type="ChEBI" id="CHEBI:30616"/>
        <dbReference type="ChEBI" id="CHEBI:61560"/>
        <dbReference type="ChEBI" id="CHEBI:73316"/>
        <dbReference type="ChEBI" id="CHEBI:456216"/>
        <dbReference type="EC" id="2.7.4.6"/>
    </reaction>
</comment>
<comment type="catalytic activity">
    <reaction evidence="1">
        <text>a ribonucleoside 5'-diphosphate + ATP = a ribonucleoside 5'-triphosphate + ADP</text>
        <dbReference type="Rhea" id="RHEA:18113"/>
        <dbReference type="ChEBI" id="CHEBI:30616"/>
        <dbReference type="ChEBI" id="CHEBI:57930"/>
        <dbReference type="ChEBI" id="CHEBI:61557"/>
        <dbReference type="ChEBI" id="CHEBI:456216"/>
        <dbReference type="EC" id="2.7.4.6"/>
    </reaction>
</comment>
<comment type="cofactor">
    <cofactor evidence="1">
        <name>Mg(2+)</name>
        <dbReference type="ChEBI" id="CHEBI:18420"/>
    </cofactor>
</comment>
<comment type="subunit">
    <text evidence="1">Homotetramer.</text>
</comment>
<comment type="subcellular location">
    <subcellularLocation>
        <location evidence="1">Cytoplasm</location>
    </subcellularLocation>
</comment>
<comment type="similarity">
    <text evidence="1">Belongs to the NDK family.</text>
</comment>
<sequence>MTIERTFSIVKPDAVKRNLIGAIYRRIEKTGMQVVAAKMLSLTKEQAQGFYAEHEGKEFFDALVEYMTSGPVMVQVLEGESVITRYRELMGKTNPDEAACGSLRSDYAISMRYNSVHGSDSPESAAREIAYFFVEDEICPRPAE</sequence>
<protein>
    <recommendedName>
        <fullName evidence="1">Nucleoside diphosphate kinase</fullName>
        <shortName evidence="1">NDK</shortName>
        <shortName evidence="1">NDP kinase</shortName>
        <ecNumber evidence="1">2.7.4.6</ecNumber>
    </recommendedName>
    <alternativeName>
        <fullName evidence="1">Nucleoside-2-P kinase</fullName>
    </alternativeName>
</protein>
<dbReference type="EC" id="2.7.4.6" evidence="1"/>
<dbReference type="EMBL" id="FM178379">
    <property type="protein sequence ID" value="CAQ78410.1"/>
    <property type="molecule type" value="Genomic_DNA"/>
</dbReference>
<dbReference type="RefSeq" id="WP_012549530.1">
    <property type="nucleotide sequence ID" value="NC_011312.1"/>
</dbReference>
<dbReference type="SMR" id="B6EGY3"/>
<dbReference type="KEGG" id="vsa:VSAL_I0725"/>
<dbReference type="eggNOG" id="COG0105">
    <property type="taxonomic scope" value="Bacteria"/>
</dbReference>
<dbReference type="HOGENOM" id="CLU_060216_8_1_6"/>
<dbReference type="Proteomes" id="UP000001730">
    <property type="component" value="Chromosome 1"/>
</dbReference>
<dbReference type="GO" id="GO:0005737">
    <property type="term" value="C:cytoplasm"/>
    <property type="evidence" value="ECO:0007669"/>
    <property type="project" value="UniProtKB-SubCell"/>
</dbReference>
<dbReference type="GO" id="GO:0005524">
    <property type="term" value="F:ATP binding"/>
    <property type="evidence" value="ECO:0007669"/>
    <property type="project" value="UniProtKB-UniRule"/>
</dbReference>
<dbReference type="GO" id="GO:0046872">
    <property type="term" value="F:metal ion binding"/>
    <property type="evidence" value="ECO:0007669"/>
    <property type="project" value="UniProtKB-KW"/>
</dbReference>
<dbReference type="GO" id="GO:0004550">
    <property type="term" value="F:nucleoside diphosphate kinase activity"/>
    <property type="evidence" value="ECO:0007669"/>
    <property type="project" value="UniProtKB-UniRule"/>
</dbReference>
<dbReference type="GO" id="GO:0006241">
    <property type="term" value="P:CTP biosynthetic process"/>
    <property type="evidence" value="ECO:0007669"/>
    <property type="project" value="UniProtKB-UniRule"/>
</dbReference>
<dbReference type="GO" id="GO:0006183">
    <property type="term" value="P:GTP biosynthetic process"/>
    <property type="evidence" value="ECO:0007669"/>
    <property type="project" value="UniProtKB-UniRule"/>
</dbReference>
<dbReference type="GO" id="GO:0006228">
    <property type="term" value="P:UTP biosynthetic process"/>
    <property type="evidence" value="ECO:0007669"/>
    <property type="project" value="UniProtKB-UniRule"/>
</dbReference>
<dbReference type="CDD" id="cd04413">
    <property type="entry name" value="NDPk_I"/>
    <property type="match status" value="1"/>
</dbReference>
<dbReference type="FunFam" id="3.30.70.141:FF:000001">
    <property type="entry name" value="Nucleoside diphosphate kinase"/>
    <property type="match status" value="1"/>
</dbReference>
<dbReference type="Gene3D" id="3.30.70.141">
    <property type="entry name" value="Nucleoside diphosphate kinase-like domain"/>
    <property type="match status" value="1"/>
</dbReference>
<dbReference type="HAMAP" id="MF_00451">
    <property type="entry name" value="NDP_kinase"/>
    <property type="match status" value="1"/>
</dbReference>
<dbReference type="InterPro" id="IPR034907">
    <property type="entry name" value="NDK-like_dom"/>
</dbReference>
<dbReference type="InterPro" id="IPR036850">
    <property type="entry name" value="NDK-like_dom_sf"/>
</dbReference>
<dbReference type="InterPro" id="IPR001564">
    <property type="entry name" value="Nucleoside_diP_kinase"/>
</dbReference>
<dbReference type="InterPro" id="IPR023005">
    <property type="entry name" value="Nucleoside_diP_kinase_AS"/>
</dbReference>
<dbReference type="NCBIfam" id="NF001908">
    <property type="entry name" value="PRK00668.1"/>
    <property type="match status" value="1"/>
</dbReference>
<dbReference type="PANTHER" id="PTHR46161">
    <property type="entry name" value="NUCLEOSIDE DIPHOSPHATE KINASE"/>
    <property type="match status" value="1"/>
</dbReference>
<dbReference type="PANTHER" id="PTHR46161:SF3">
    <property type="entry name" value="NUCLEOSIDE DIPHOSPHATE KINASE DDB_G0292928-RELATED"/>
    <property type="match status" value="1"/>
</dbReference>
<dbReference type="Pfam" id="PF00334">
    <property type="entry name" value="NDK"/>
    <property type="match status" value="1"/>
</dbReference>
<dbReference type="PRINTS" id="PR01243">
    <property type="entry name" value="NUCDPKINASE"/>
</dbReference>
<dbReference type="SMART" id="SM00562">
    <property type="entry name" value="NDK"/>
    <property type="match status" value="1"/>
</dbReference>
<dbReference type="SUPFAM" id="SSF54919">
    <property type="entry name" value="Nucleoside diphosphate kinase, NDK"/>
    <property type="match status" value="1"/>
</dbReference>
<dbReference type="PROSITE" id="PS00469">
    <property type="entry name" value="NDPK"/>
    <property type="match status" value="1"/>
</dbReference>
<dbReference type="PROSITE" id="PS51374">
    <property type="entry name" value="NDPK_LIKE"/>
    <property type="match status" value="1"/>
</dbReference>
<gene>
    <name evidence="1" type="primary">ndk</name>
    <name type="ordered locus">VSAL_I0725</name>
</gene>
<accession>B6EGY3</accession>
<reference key="1">
    <citation type="journal article" date="2008" name="BMC Genomics">
        <title>The genome sequence of the fish pathogen Aliivibrio salmonicida strain LFI1238 shows extensive evidence of gene decay.</title>
        <authorList>
            <person name="Hjerde E."/>
            <person name="Lorentzen M.S."/>
            <person name="Holden M.T."/>
            <person name="Seeger K."/>
            <person name="Paulsen S."/>
            <person name="Bason N."/>
            <person name="Churcher C."/>
            <person name="Harris D."/>
            <person name="Norbertczak H."/>
            <person name="Quail M.A."/>
            <person name="Sanders S."/>
            <person name="Thurston S."/>
            <person name="Parkhill J."/>
            <person name="Willassen N.P."/>
            <person name="Thomson N.R."/>
        </authorList>
    </citation>
    <scope>NUCLEOTIDE SEQUENCE [LARGE SCALE GENOMIC DNA]</scope>
    <source>
        <strain>LFI1238</strain>
    </source>
</reference>
<organism>
    <name type="scientific">Aliivibrio salmonicida (strain LFI1238)</name>
    <name type="common">Vibrio salmonicida (strain LFI1238)</name>
    <dbReference type="NCBI Taxonomy" id="316275"/>
    <lineage>
        <taxon>Bacteria</taxon>
        <taxon>Pseudomonadati</taxon>
        <taxon>Pseudomonadota</taxon>
        <taxon>Gammaproteobacteria</taxon>
        <taxon>Vibrionales</taxon>
        <taxon>Vibrionaceae</taxon>
        <taxon>Aliivibrio</taxon>
    </lineage>
</organism>
<feature type="chain" id="PRO_1000192252" description="Nucleoside diphosphate kinase">
    <location>
        <begin position="1"/>
        <end position="144"/>
    </location>
</feature>
<feature type="active site" description="Pros-phosphohistidine intermediate" evidence="1">
    <location>
        <position position="117"/>
    </location>
</feature>
<feature type="binding site" evidence="1">
    <location>
        <position position="11"/>
    </location>
    <ligand>
        <name>ATP</name>
        <dbReference type="ChEBI" id="CHEBI:30616"/>
    </ligand>
</feature>
<feature type="binding site" evidence="1">
    <location>
        <position position="59"/>
    </location>
    <ligand>
        <name>ATP</name>
        <dbReference type="ChEBI" id="CHEBI:30616"/>
    </ligand>
</feature>
<feature type="binding site" evidence="1">
    <location>
        <position position="87"/>
    </location>
    <ligand>
        <name>ATP</name>
        <dbReference type="ChEBI" id="CHEBI:30616"/>
    </ligand>
</feature>
<feature type="binding site" evidence="1">
    <location>
        <position position="93"/>
    </location>
    <ligand>
        <name>ATP</name>
        <dbReference type="ChEBI" id="CHEBI:30616"/>
    </ligand>
</feature>
<feature type="binding site" evidence="1">
    <location>
        <position position="104"/>
    </location>
    <ligand>
        <name>ATP</name>
        <dbReference type="ChEBI" id="CHEBI:30616"/>
    </ligand>
</feature>
<feature type="binding site" evidence="1">
    <location>
        <position position="114"/>
    </location>
    <ligand>
        <name>ATP</name>
        <dbReference type="ChEBI" id="CHEBI:30616"/>
    </ligand>
</feature>
<proteinExistence type="inferred from homology"/>